<evidence type="ECO:0000250" key="1">
    <source>
        <dbReference type="UniProtKB" id="P52754"/>
    </source>
</evidence>
<evidence type="ECO:0000255" key="2"/>
<evidence type="ECO:0000269" key="3">
    <source>
    </source>
</evidence>
<evidence type="ECO:0000303" key="4">
    <source>
    </source>
</evidence>
<evidence type="ECO:0000305" key="5"/>
<evidence type="ECO:0000305" key="6">
    <source>
    </source>
</evidence>
<keyword id="KW-0134">Cell wall</keyword>
<keyword id="KW-1015">Disulfide bond</keyword>
<keyword id="KW-1185">Reference proteome</keyword>
<keyword id="KW-0964">Secreted</keyword>
<keyword id="KW-0732">Signal</keyword>
<proteinExistence type="inferred from homology"/>
<protein>
    <recommendedName>
        <fullName evidence="4">Class I hydrophobin E</fullName>
    </recommendedName>
</protein>
<organism>
    <name type="scientific">Penicillium expansum</name>
    <name type="common">Blue mold rot fungus</name>
    <dbReference type="NCBI Taxonomy" id="27334"/>
    <lineage>
        <taxon>Eukaryota</taxon>
        <taxon>Fungi</taxon>
        <taxon>Dikarya</taxon>
        <taxon>Ascomycota</taxon>
        <taxon>Pezizomycotina</taxon>
        <taxon>Eurotiomycetes</taxon>
        <taxon>Eurotiomycetidae</taxon>
        <taxon>Eurotiales</taxon>
        <taxon>Aspergillaceae</taxon>
        <taxon>Penicillium</taxon>
    </lineage>
</organism>
<sequence>MQLTTLLTGLISVLSVTTAIPMGSESPTPTSSVSKSLIAHSSSASVSASPTPSPNPYEAYTCPKDKFKACCMSVQQTGKDIVKQLGDLVPVLSGLQVSSAISFQCKNMTEREAPDSCNGQGYTPMCCNTKVEDTGFNTCKPFEDVKKAYYMNNMKDIPESQADMIMDILT</sequence>
<dbReference type="EMBL" id="JQFZ01000147">
    <property type="protein sequence ID" value="KGO57376.1"/>
    <property type="molecule type" value="Genomic_DNA"/>
</dbReference>
<dbReference type="RefSeq" id="XP_016599044.1">
    <property type="nucleotide sequence ID" value="XM_016737329.1"/>
</dbReference>
<dbReference type="STRING" id="27334.A0A0A2KI06"/>
<dbReference type="GeneID" id="27672748"/>
<dbReference type="VEuPathDB" id="FungiDB:PEXP_096890"/>
<dbReference type="HOGENOM" id="CLU_1571181_0_0_1"/>
<dbReference type="OrthoDB" id="4292214at2759"/>
<dbReference type="PhylomeDB" id="A0A0A2KI06"/>
<dbReference type="Proteomes" id="UP000030143">
    <property type="component" value="Unassembled WGS sequence"/>
</dbReference>
<reference key="1">
    <citation type="journal article" date="2015" name="Mol. Plant Microbe Interact.">
        <title>Genome, transcriptome, and functional analyses of Penicillium expansum provide new insights into secondary metabolism and pathogenicity.</title>
        <authorList>
            <person name="Ballester A.R."/>
            <person name="Marcet-Houben M."/>
            <person name="Levin E."/>
            <person name="Sela N."/>
            <person name="Selma-Lazaro C."/>
            <person name="Carmona L."/>
            <person name="Wisniewski M."/>
            <person name="Droby S."/>
            <person name="Gonzalez-Candelas L."/>
            <person name="Gabaldon T."/>
        </authorList>
    </citation>
    <scope>NUCLEOTIDE SEQUENCE [LARGE SCALE GENOMIC DNA]</scope>
    <source>
        <strain>MD-8</strain>
    </source>
</reference>
<reference key="2">
    <citation type="journal article" date="2022" name="MBio">
        <title>The Hydrophobin Gene Family Confers a Fitness Trade-off between Spore Dispersal and Host Colonization in Penicillium expansum.</title>
        <authorList>
            <person name="Luciano-Rosario D."/>
            <person name="Eagan J.L."/>
            <person name="Aryal N."/>
            <person name="Dominguez E.G."/>
            <person name="Hull C.M."/>
            <person name="Keller N.P."/>
        </authorList>
    </citation>
    <scope>FUNCTION</scope>
    <scope>DISRUPTION PHENOTYPE</scope>
</reference>
<comment type="function">
    <text evidence="3 6">Aerial growth, conidiation, and dispersal of filamentous fungi in the environment rely upon a capability of their secreting small amphipathic proteins called hydrophobins (HPBs) with low sequence identity. Class I can self-assemble into an outermost layer of rodlet bundles on aerial cell surfaces, conferring cellular hydrophobicity that supports fungal growth, development and dispersal; whereas Class II form highly ordered films at water-air interfaces through intermolecular interactions but contribute nothing to the rodlet structure (Probable). In P.expansum, hydrophobins contribute to germination, tolerance to cold stress and mycotoxins patulin and citrinin production (PubMed:36374077).</text>
</comment>
<comment type="subcellular location">
    <subcellularLocation>
        <location evidence="6">Secreted</location>
    </subcellularLocation>
    <subcellularLocation>
        <location evidence="6">Secreted</location>
        <location evidence="6">Cell wall</location>
    </subcellularLocation>
</comment>
<comment type="disruption phenotype">
    <text evidence="3">Affects hydrophobicity only when HfbC, HfbD and HfbF are also deleted (PubMed:36374077). Disruption of all 7 hydrophobins leads to altered germination kinetics, decreased survival under exposure to extreme cold stress and increased mycotoxins patulin and citrinin production (PubMed:36374077).</text>
</comment>
<comment type="similarity">
    <text evidence="5">Belongs to the fungal hydrophobin family.</text>
</comment>
<accession>A0A0A2KI06</accession>
<feature type="signal peptide" evidence="2">
    <location>
        <begin position="1"/>
        <end position="19"/>
    </location>
</feature>
<feature type="chain" id="PRO_5009752850" description="Class I hydrophobin E">
    <location>
        <begin position="20"/>
        <end position="170"/>
    </location>
</feature>
<feature type="disulfide bond" evidence="1">
    <location>
        <begin position="62"/>
        <end position="126"/>
    </location>
</feature>
<feature type="disulfide bond" evidence="1">
    <location>
        <begin position="70"/>
        <end position="117"/>
    </location>
</feature>
<feature type="disulfide bond" evidence="1">
    <location>
        <begin position="71"/>
        <end position="105"/>
    </location>
</feature>
<feature type="disulfide bond" evidence="1">
    <location>
        <begin position="127"/>
        <end position="139"/>
    </location>
</feature>
<gene>
    <name evidence="4" type="primary">HfbE</name>
    <name type="ORF">PEX2_000510</name>
</gene>
<name>HFBE_PENEN</name>